<evidence type="ECO:0000255" key="1">
    <source>
        <dbReference type="HAMAP-Rule" id="MF_00120"/>
    </source>
</evidence>
<organism>
    <name type="scientific">Desulfosudis oleivorans (strain DSM 6200 / JCM 39069 / Hxd3)</name>
    <name type="common">Desulfococcus oleovorans</name>
    <dbReference type="NCBI Taxonomy" id="96561"/>
    <lineage>
        <taxon>Bacteria</taxon>
        <taxon>Pseudomonadati</taxon>
        <taxon>Thermodesulfobacteriota</taxon>
        <taxon>Desulfobacteria</taxon>
        <taxon>Desulfobacterales</taxon>
        <taxon>Desulfosudaceae</taxon>
        <taxon>Desulfosudis</taxon>
    </lineage>
</organism>
<protein>
    <recommendedName>
        <fullName evidence="1">Glutamyl-tRNA(Gln) amidotransferase subunit A</fullName>
        <shortName evidence="1">Glu-ADT subunit A</shortName>
        <ecNumber evidence="1">6.3.5.7</ecNumber>
    </recommendedName>
</protein>
<proteinExistence type="inferred from homology"/>
<comment type="function">
    <text evidence="1">Allows the formation of correctly charged Gln-tRNA(Gln) through the transamidation of misacylated Glu-tRNA(Gln) in organisms which lack glutaminyl-tRNA synthetase. The reaction takes place in the presence of glutamine and ATP through an activated gamma-phospho-Glu-tRNA(Gln).</text>
</comment>
<comment type="catalytic activity">
    <reaction evidence="1">
        <text>L-glutamyl-tRNA(Gln) + L-glutamine + ATP + H2O = L-glutaminyl-tRNA(Gln) + L-glutamate + ADP + phosphate + H(+)</text>
        <dbReference type="Rhea" id="RHEA:17521"/>
        <dbReference type="Rhea" id="RHEA-COMP:9681"/>
        <dbReference type="Rhea" id="RHEA-COMP:9684"/>
        <dbReference type="ChEBI" id="CHEBI:15377"/>
        <dbReference type="ChEBI" id="CHEBI:15378"/>
        <dbReference type="ChEBI" id="CHEBI:29985"/>
        <dbReference type="ChEBI" id="CHEBI:30616"/>
        <dbReference type="ChEBI" id="CHEBI:43474"/>
        <dbReference type="ChEBI" id="CHEBI:58359"/>
        <dbReference type="ChEBI" id="CHEBI:78520"/>
        <dbReference type="ChEBI" id="CHEBI:78521"/>
        <dbReference type="ChEBI" id="CHEBI:456216"/>
        <dbReference type="EC" id="6.3.5.7"/>
    </reaction>
</comment>
<comment type="subunit">
    <text evidence="1">Heterotrimer of A, B and C subunits.</text>
</comment>
<comment type="similarity">
    <text evidence="1">Belongs to the amidase family. GatA subfamily.</text>
</comment>
<dbReference type="EC" id="6.3.5.7" evidence="1"/>
<dbReference type="EMBL" id="CP000859">
    <property type="protein sequence ID" value="ABW65961.1"/>
    <property type="molecule type" value="Genomic_DNA"/>
</dbReference>
<dbReference type="RefSeq" id="WP_012173580.1">
    <property type="nucleotide sequence ID" value="NC_009943.1"/>
</dbReference>
<dbReference type="SMR" id="A8ZSP8"/>
<dbReference type="STRING" id="96561.Dole_0151"/>
<dbReference type="KEGG" id="dol:Dole_0151"/>
<dbReference type="eggNOG" id="COG0154">
    <property type="taxonomic scope" value="Bacteria"/>
</dbReference>
<dbReference type="HOGENOM" id="CLU_009600_0_3_7"/>
<dbReference type="OrthoDB" id="9811471at2"/>
<dbReference type="Proteomes" id="UP000008561">
    <property type="component" value="Chromosome"/>
</dbReference>
<dbReference type="GO" id="GO:0030956">
    <property type="term" value="C:glutamyl-tRNA(Gln) amidotransferase complex"/>
    <property type="evidence" value="ECO:0007669"/>
    <property type="project" value="InterPro"/>
</dbReference>
<dbReference type="GO" id="GO:0005524">
    <property type="term" value="F:ATP binding"/>
    <property type="evidence" value="ECO:0007669"/>
    <property type="project" value="UniProtKB-KW"/>
</dbReference>
<dbReference type="GO" id="GO:0050567">
    <property type="term" value="F:glutaminyl-tRNA synthase (glutamine-hydrolyzing) activity"/>
    <property type="evidence" value="ECO:0007669"/>
    <property type="project" value="UniProtKB-UniRule"/>
</dbReference>
<dbReference type="GO" id="GO:0006412">
    <property type="term" value="P:translation"/>
    <property type="evidence" value="ECO:0007669"/>
    <property type="project" value="UniProtKB-UniRule"/>
</dbReference>
<dbReference type="Gene3D" id="3.90.1300.10">
    <property type="entry name" value="Amidase signature (AS) domain"/>
    <property type="match status" value="1"/>
</dbReference>
<dbReference type="HAMAP" id="MF_00120">
    <property type="entry name" value="GatA"/>
    <property type="match status" value="1"/>
</dbReference>
<dbReference type="InterPro" id="IPR000120">
    <property type="entry name" value="Amidase"/>
</dbReference>
<dbReference type="InterPro" id="IPR020556">
    <property type="entry name" value="Amidase_CS"/>
</dbReference>
<dbReference type="InterPro" id="IPR023631">
    <property type="entry name" value="Amidase_dom"/>
</dbReference>
<dbReference type="InterPro" id="IPR036928">
    <property type="entry name" value="AS_sf"/>
</dbReference>
<dbReference type="InterPro" id="IPR004412">
    <property type="entry name" value="GatA"/>
</dbReference>
<dbReference type="NCBIfam" id="TIGR00132">
    <property type="entry name" value="gatA"/>
    <property type="match status" value="1"/>
</dbReference>
<dbReference type="PANTHER" id="PTHR11895:SF151">
    <property type="entry name" value="GLUTAMYL-TRNA(GLN) AMIDOTRANSFERASE SUBUNIT A"/>
    <property type="match status" value="1"/>
</dbReference>
<dbReference type="PANTHER" id="PTHR11895">
    <property type="entry name" value="TRANSAMIDASE"/>
    <property type="match status" value="1"/>
</dbReference>
<dbReference type="Pfam" id="PF01425">
    <property type="entry name" value="Amidase"/>
    <property type="match status" value="1"/>
</dbReference>
<dbReference type="SUPFAM" id="SSF75304">
    <property type="entry name" value="Amidase signature (AS) enzymes"/>
    <property type="match status" value="1"/>
</dbReference>
<dbReference type="PROSITE" id="PS00571">
    <property type="entry name" value="AMIDASES"/>
    <property type="match status" value="1"/>
</dbReference>
<name>GATA_DESOH</name>
<accession>A8ZSP8</accession>
<keyword id="KW-0067">ATP-binding</keyword>
<keyword id="KW-0436">Ligase</keyword>
<keyword id="KW-0547">Nucleotide-binding</keyword>
<keyword id="KW-0648">Protein biosynthesis</keyword>
<keyword id="KW-1185">Reference proteome</keyword>
<feature type="chain" id="PRO_1000095132" description="Glutamyl-tRNA(Gln) amidotransferase subunit A">
    <location>
        <begin position="1"/>
        <end position="486"/>
    </location>
</feature>
<feature type="active site" description="Charge relay system" evidence="1">
    <location>
        <position position="78"/>
    </location>
</feature>
<feature type="active site" description="Charge relay system" evidence="1">
    <location>
        <position position="153"/>
    </location>
</feature>
<feature type="active site" description="Acyl-ester intermediate" evidence="1">
    <location>
        <position position="177"/>
    </location>
</feature>
<gene>
    <name evidence="1" type="primary">gatA</name>
    <name type="ordered locus">Dole_0151</name>
</gene>
<reference key="1">
    <citation type="submission" date="2007-10" db="EMBL/GenBank/DDBJ databases">
        <title>Complete sequence of Desulfococcus oleovorans Hxd3.</title>
        <authorList>
            <consortium name="US DOE Joint Genome Institute"/>
            <person name="Copeland A."/>
            <person name="Lucas S."/>
            <person name="Lapidus A."/>
            <person name="Barry K."/>
            <person name="Glavina del Rio T."/>
            <person name="Dalin E."/>
            <person name="Tice H."/>
            <person name="Pitluck S."/>
            <person name="Kiss H."/>
            <person name="Brettin T."/>
            <person name="Bruce D."/>
            <person name="Detter J.C."/>
            <person name="Han C."/>
            <person name="Schmutz J."/>
            <person name="Larimer F."/>
            <person name="Land M."/>
            <person name="Hauser L."/>
            <person name="Kyrpides N."/>
            <person name="Kim E."/>
            <person name="Wawrik B."/>
            <person name="Richardson P."/>
        </authorList>
    </citation>
    <scope>NUCLEOTIDE SEQUENCE [LARGE SCALE GENOMIC DNA]</scope>
    <source>
        <strain>DSM 6200 / JCM 39069 / Hxd3</strain>
    </source>
</reference>
<sequence length="486" mass="51404">MEPYALTIHEARQLLDKKEISSVELTRSVFDRIERVEPKVGAYITLARESALSAAAAADTRLQSGGIAPLTGIPLAVKDLICTTGLRTTCASRMLETFMPPYDATVIEKLKTQGAVITGKVNMDEFAMGSSTEHSALGSTKNPWNLACIPGGSSGGSAASVAADMCLGSLGSDTGGSIRQPASHCGVVGIKPTYGRVSRYGLVAFASSLDQIGVLAKDVTDSALLLSAISGHDPSDSTSVPREVPDYAASCEKGLSGLTIGVCREYINAEGLDPEVADTVNRSIEHMKAQGAACVEVSLPHAQYAVAAYYVIAPAEASSNLARYDGVKYGFRDPEADSLLEMYARTRSRGFGKEVQRRIIIGTYCLSSGYYDAYYRKASQVRSLIADDFKKAFETCDVIVSPVAPTPAFELGAKTEDPLTMYLSDIFTLSANLAGVPGMSVPGGFSSTGLPIGVQLIAGHFNEPALVRCAWNLEQAVNIANKKPAL</sequence>